<keyword id="KW-0217">Developmental protein</keyword>
<keyword id="KW-0238">DNA-binding</keyword>
<keyword id="KW-0371">Homeobox</keyword>
<keyword id="KW-0539">Nucleus</keyword>
<keyword id="KW-0597">Phosphoprotein</keyword>
<keyword id="KW-1185">Reference proteome</keyword>
<keyword id="KW-0804">Transcription</keyword>
<keyword id="KW-0805">Transcription regulation</keyword>
<reference key="1">
    <citation type="journal article" date="2009" name="PLoS Biol.">
        <title>Lineage-specific biology revealed by a finished genome assembly of the mouse.</title>
        <authorList>
            <person name="Church D.M."/>
            <person name="Goodstadt L."/>
            <person name="Hillier L.W."/>
            <person name="Zody M.C."/>
            <person name="Goldstein S."/>
            <person name="She X."/>
            <person name="Bult C.J."/>
            <person name="Agarwala R."/>
            <person name="Cherry J.L."/>
            <person name="DiCuccio M."/>
            <person name="Hlavina W."/>
            <person name="Kapustin Y."/>
            <person name="Meric P."/>
            <person name="Maglott D."/>
            <person name="Birtle Z."/>
            <person name="Marques A.C."/>
            <person name="Graves T."/>
            <person name="Zhou S."/>
            <person name="Teague B."/>
            <person name="Potamousis K."/>
            <person name="Churas C."/>
            <person name="Place M."/>
            <person name="Herschleb J."/>
            <person name="Runnheim R."/>
            <person name="Forrest D."/>
            <person name="Amos-Landgraf J."/>
            <person name="Schwartz D.C."/>
            <person name="Cheng Z."/>
            <person name="Lindblad-Toh K."/>
            <person name="Eichler E.E."/>
            <person name="Ponting C.P."/>
        </authorList>
    </citation>
    <scope>NUCLEOTIDE SEQUENCE [LARGE SCALE GENOMIC DNA]</scope>
    <source>
        <strain>C57BL/6J</strain>
    </source>
</reference>
<reference key="2">
    <citation type="journal article" date="2004" name="Genome Res.">
        <title>The status, quality, and expansion of the NIH full-length cDNA project: the Mammalian Gene Collection (MGC).</title>
        <authorList>
            <consortium name="The MGC Project Team"/>
        </authorList>
    </citation>
    <scope>NUCLEOTIDE SEQUENCE [LARGE SCALE MRNA]</scope>
    <source>
        <tissue>Brain</tissue>
    </source>
</reference>
<reference key="3">
    <citation type="journal article" date="1993" name="Cell">
        <title>The zinc finger gene Krox20 regulates HoxB2 (Hox2.8) during hindbrain segmentation.</title>
        <authorList>
            <person name="Sham M.H."/>
            <person name="Vesque C."/>
            <person name="Nonchev S."/>
            <person name="Marshall H."/>
            <person name="Frain M."/>
            <person name="Gupta R.D."/>
            <person name="Whiting J."/>
            <person name="Wilkinson D."/>
            <person name="Charnay P."/>
            <person name="Krumlauf R."/>
        </authorList>
    </citation>
    <scope>DEVELOPMENTAL STAGE</scope>
</reference>
<reference key="4">
    <citation type="journal article" date="2006" name="FEBS Lett.">
        <title>p205, a potential tumor suppressor, inhibits cell proliferation via multiple pathways of cell cycle regulation.</title>
        <authorList>
            <person name="Asefa B."/>
            <person name="Dermott J.M."/>
            <person name="Kaldis P."/>
            <person name="Stefanisko K."/>
            <person name="Garfinkel D.J."/>
            <person name="Keller J.R."/>
        </authorList>
    </citation>
    <scope>INTERACTION WITH IFI211</scope>
</reference>
<sequence length="354" mass="38096">MNFEFEREIGFINSQPSLAECLTSFPAVLETFQTSSIKESTLIPPPPPLEQTFPSLQLGASTLQRPGSQKQAGDGPALRSPPPLPVAPPAPEFPWMKEKKSTKKPSQSAASPSPAASSVRASEVGSPSDGPGLPECGGSGSRRLRTAYTNTQLLELEKEFHFNKYLCRPRRVEIAALLDLTERQVKVWFQNRRMKHKRQTQHREPPEGEPGGPSAQDDAGEPAEEPTVSPGDVATHRLREACFHPAEAAQGPRGAPPSALPATTLESVGASSPGCTMLRAGGRQSEPLPEDACPERQDSPFLPDLNFFAADSCLQMSGGLSPSLQGSLDSPVPFSEEELDFFTSTLCAIDLQFP</sequence>
<dbReference type="EMBL" id="AL606824">
    <property type="status" value="NOT_ANNOTATED_CDS"/>
    <property type="molecule type" value="Genomic_DNA"/>
</dbReference>
<dbReference type="EMBL" id="BC138494">
    <property type="protein sequence ID" value="AAI38495.1"/>
    <property type="molecule type" value="mRNA"/>
</dbReference>
<dbReference type="EMBL" id="BC138495">
    <property type="protein sequence ID" value="AAI38496.1"/>
    <property type="molecule type" value="mRNA"/>
</dbReference>
<dbReference type="CCDS" id="CCDS36290.1"/>
<dbReference type="RefSeq" id="NP_598793.2">
    <property type="nucleotide sequence ID" value="NM_134032.2"/>
</dbReference>
<dbReference type="SMR" id="P0C1T1"/>
<dbReference type="BioGRID" id="222192">
    <property type="interactions" value="1"/>
</dbReference>
<dbReference type="FunCoup" id="P0C1T1">
    <property type="interactions" value="796"/>
</dbReference>
<dbReference type="STRING" id="10090.ENSMUSP00000098092"/>
<dbReference type="PhosphoSitePlus" id="P0C1T1"/>
<dbReference type="PaxDb" id="10090-ENSMUSP00000098092"/>
<dbReference type="Antibodypedia" id="30263">
    <property type="antibodies" value="163 antibodies from 28 providers"/>
</dbReference>
<dbReference type="DNASU" id="103889"/>
<dbReference type="Ensembl" id="ENSMUST00000100523.7">
    <property type="protein sequence ID" value="ENSMUSP00000098092.5"/>
    <property type="gene ID" value="ENSMUSG00000075588.7"/>
</dbReference>
<dbReference type="GeneID" id="103889"/>
<dbReference type="KEGG" id="mmu:103889"/>
<dbReference type="UCSC" id="uc007lby.1">
    <property type="organism name" value="mouse"/>
</dbReference>
<dbReference type="AGR" id="MGI:96183"/>
<dbReference type="CTD" id="3212"/>
<dbReference type="MGI" id="MGI:96183">
    <property type="gene designation" value="Hoxb2"/>
</dbReference>
<dbReference type="VEuPathDB" id="HostDB:ENSMUSG00000075588"/>
<dbReference type="eggNOG" id="KOG0489">
    <property type="taxonomic scope" value="Eukaryota"/>
</dbReference>
<dbReference type="GeneTree" id="ENSGT00940000155029"/>
<dbReference type="HOGENOM" id="CLU_048378_0_0_1"/>
<dbReference type="InParanoid" id="P0C1T1"/>
<dbReference type="OMA" id="DLPHFNF"/>
<dbReference type="OrthoDB" id="6159439at2759"/>
<dbReference type="PhylomeDB" id="P0C1T1"/>
<dbReference type="TreeFam" id="TF317730"/>
<dbReference type="BioGRID-ORCS" id="103889">
    <property type="hits" value="7 hits in 77 CRISPR screens"/>
</dbReference>
<dbReference type="ChiTaRS" id="Hoxb2">
    <property type="organism name" value="mouse"/>
</dbReference>
<dbReference type="PRO" id="PR:P0C1T1"/>
<dbReference type="Proteomes" id="UP000000589">
    <property type="component" value="Chromosome 11"/>
</dbReference>
<dbReference type="RNAct" id="P0C1T1">
    <property type="molecule type" value="protein"/>
</dbReference>
<dbReference type="Bgee" id="ENSMUSG00000075588">
    <property type="expression patterns" value="Expressed in rhombomere 3 and 92 other cell types or tissues"/>
</dbReference>
<dbReference type="GO" id="GO:0005654">
    <property type="term" value="C:nucleoplasm"/>
    <property type="evidence" value="ECO:0007669"/>
    <property type="project" value="Ensembl"/>
</dbReference>
<dbReference type="GO" id="GO:0001228">
    <property type="term" value="F:DNA-binding transcription activator activity, RNA polymerase II-specific"/>
    <property type="evidence" value="ECO:0007669"/>
    <property type="project" value="Ensembl"/>
</dbReference>
<dbReference type="GO" id="GO:1990837">
    <property type="term" value="F:sequence-specific double-stranded DNA binding"/>
    <property type="evidence" value="ECO:0007669"/>
    <property type="project" value="Ensembl"/>
</dbReference>
<dbReference type="GO" id="GO:0009952">
    <property type="term" value="P:anterior/posterior pattern specification"/>
    <property type="evidence" value="ECO:0000315"/>
    <property type="project" value="MGI"/>
</dbReference>
<dbReference type="GO" id="GO:0009953">
    <property type="term" value="P:dorsal/ventral pattern formation"/>
    <property type="evidence" value="ECO:0000316"/>
    <property type="project" value="MGI"/>
</dbReference>
<dbReference type="GO" id="GO:0048704">
    <property type="term" value="P:embryonic skeletal system morphogenesis"/>
    <property type="evidence" value="ECO:0000316"/>
    <property type="project" value="MGI"/>
</dbReference>
<dbReference type="GO" id="GO:0021612">
    <property type="term" value="P:facial nerve structural organization"/>
    <property type="evidence" value="ECO:0000315"/>
    <property type="project" value="MGI"/>
</dbReference>
<dbReference type="GO" id="GO:0002011">
    <property type="term" value="P:morphogenesis of an epithelial sheet"/>
    <property type="evidence" value="ECO:0000316"/>
    <property type="project" value="MGI"/>
</dbReference>
<dbReference type="GO" id="GO:0048857">
    <property type="term" value="P:neural nucleus development"/>
    <property type="evidence" value="ECO:0000315"/>
    <property type="project" value="MGI"/>
</dbReference>
<dbReference type="GO" id="GO:0021569">
    <property type="term" value="P:rhombomere 3 development"/>
    <property type="evidence" value="ECO:0000316"/>
    <property type="project" value="MGI"/>
</dbReference>
<dbReference type="GO" id="GO:0021570">
    <property type="term" value="P:rhombomere 4 development"/>
    <property type="evidence" value="ECO:0000316"/>
    <property type="project" value="MGI"/>
</dbReference>
<dbReference type="GO" id="GO:0048705">
    <property type="term" value="P:skeletal system morphogenesis"/>
    <property type="evidence" value="ECO:0000315"/>
    <property type="project" value="MGI"/>
</dbReference>
<dbReference type="CDD" id="cd00086">
    <property type="entry name" value="homeodomain"/>
    <property type="match status" value="1"/>
</dbReference>
<dbReference type="FunFam" id="1.10.10.60:FF:000145">
    <property type="entry name" value="homeobox protein Hox-A2"/>
    <property type="match status" value="1"/>
</dbReference>
<dbReference type="Gene3D" id="1.10.10.60">
    <property type="entry name" value="Homeodomain-like"/>
    <property type="match status" value="1"/>
</dbReference>
<dbReference type="InterPro" id="IPR001356">
    <property type="entry name" value="HD"/>
</dbReference>
<dbReference type="InterPro" id="IPR020479">
    <property type="entry name" value="HD_metazoa"/>
</dbReference>
<dbReference type="InterPro" id="IPR001827">
    <property type="entry name" value="Homeobox_Antennapedia_CS"/>
</dbReference>
<dbReference type="InterPro" id="IPR017970">
    <property type="entry name" value="Homeobox_CS"/>
</dbReference>
<dbReference type="InterPro" id="IPR009057">
    <property type="entry name" value="Homeodomain-like_sf"/>
</dbReference>
<dbReference type="PANTHER" id="PTHR45664:SF7">
    <property type="entry name" value="HOMEOBOX PROTEIN HOX-B2"/>
    <property type="match status" value="1"/>
</dbReference>
<dbReference type="PANTHER" id="PTHR45664">
    <property type="entry name" value="PROTEIN ZERKNUELLT 1-RELATED"/>
    <property type="match status" value="1"/>
</dbReference>
<dbReference type="Pfam" id="PF00046">
    <property type="entry name" value="Homeodomain"/>
    <property type="match status" value="1"/>
</dbReference>
<dbReference type="PRINTS" id="PR00024">
    <property type="entry name" value="HOMEOBOX"/>
</dbReference>
<dbReference type="SMART" id="SM00389">
    <property type="entry name" value="HOX"/>
    <property type="match status" value="1"/>
</dbReference>
<dbReference type="SUPFAM" id="SSF46689">
    <property type="entry name" value="Homeodomain-like"/>
    <property type="match status" value="1"/>
</dbReference>
<dbReference type="PROSITE" id="PS00032">
    <property type="entry name" value="ANTENNAPEDIA"/>
    <property type="match status" value="1"/>
</dbReference>
<dbReference type="PROSITE" id="PS00027">
    <property type="entry name" value="HOMEOBOX_1"/>
    <property type="match status" value="1"/>
</dbReference>
<dbReference type="PROSITE" id="PS50071">
    <property type="entry name" value="HOMEOBOX_2"/>
    <property type="match status" value="1"/>
</dbReference>
<protein>
    <recommendedName>
        <fullName>Homeobox protein Hox-B2</fullName>
    </recommendedName>
    <alternativeName>
        <fullName>Homeobox protein Hox-2.8</fullName>
    </alternativeName>
</protein>
<name>HXB2_MOUSE</name>
<feature type="chain" id="PRO_0000248841" description="Homeobox protein Hox-B2">
    <location>
        <begin position="1"/>
        <end position="354"/>
    </location>
</feature>
<feature type="DNA-binding region" description="Homeobox" evidence="2">
    <location>
        <begin position="141"/>
        <end position="200"/>
    </location>
</feature>
<feature type="region of interest" description="Disordered" evidence="3">
    <location>
        <begin position="39"/>
        <end position="143"/>
    </location>
</feature>
<feature type="region of interest" description="Disordered" evidence="3">
    <location>
        <begin position="193"/>
        <end position="231"/>
    </location>
</feature>
<feature type="region of interest" description="Disordered" evidence="3">
    <location>
        <begin position="246"/>
        <end position="295"/>
    </location>
</feature>
<feature type="short sequence motif" description="Antp-type hexapeptide">
    <location>
        <begin position="92"/>
        <end position="97"/>
    </location>
</feature>
<feature type="compositionally biased region" description="Polar residues" evidence="3">
    <location>
        <begin position="52"/>
        <end position="71"/>
    </location>
</feature>
<feature type="compositionally biased region" description="Pro residues" evidence="3">
    <location>
        <begin position="79"/>
        <end position="92"/>
    </location>
</feature>
<feature type="compositionally biased region" description="Low complexity" evidence="3">
    <location>
        <begin position="104"/>
        <end position="118"/>
    </location>
</feature>
<feature type="compositionally biased region" description="Polar residues" evidence="3">
    <location>
        <begin position="264"/>
        <end position="274"/>
    </location>
</feature>
<feature type="modified residue" description="Phosphoserine" evidence="1">
    <location>
        <position position="272"/>
    </location>
</feature>
<gene>
    <name type="primary">Hoxb2</name>
    <name type="synonym">Hox-2.8</name>
</gene>
<accession>P0C1T1</accession>
<accession>A2A739</accession>
<accession>B9EHW9</accession>
<proteinExistence type="evidence at protein level"/>
<evidence type="ECO:0000250" key="1">
    <source>
        <dbReference type="UniProtKB" id="P14652"/>
    </source>
</evidence>
<evidence type="ECO:0000255" key="2">
    <source>
        <dbReference type="PROSITE-ProRule" id="PRU00108"/>
    </source>
</evidence>
<evidence type="ECO:0000256" key="3">
    <source>
        <dbReference type="SAM" id="MobiDB-lite"/>
    </source>
</evidence>
<evidence type="ECO:0000269" key="4">
    <source>
    </source>
</evidence>
<evidence type="ECO:0000269" key="5">
    <source>
    </source>
</evidence>
<evidence type="ECO:0000305" key="6"/>
<comment type="function">
    <text evidence="1">Sequence-specific transcription factor which is part of a developmental regulatory system that provides cells with specific positional identities on the anterior-posterior axis.</text>
</comment>
<comment type="subunit">
    <text evidence="1 4">Part of the nuclear protein complex gamma-globin promoter and enhancer binding factor (gamma-PE) composed at least by SATB1 and HOXB2 (By similarity). Interaction with IFI211/p205 (PubMed:16458891).</text>
</comment>
<comment type="subcellular location">
    <subcellularLocation>
        <location evidence="2">Nucleus</location>
    </subcellularLocation>
</comment>
<comment type="developmental stage">
    <text evidence="5">At 8 dpc, expressed in the developing hindbrain in regions that give rise to rhombomeric segmentations r3, r4 and r5.</text>
</comment>
<comment type="similarity">
    <text evidence="6">Belongs to the Antp homeobox family. Proboscipedia subfamily.</text>
</comment>
<organism>
    <name type="scientific">Mus musculus</name>
    <name type="common">Mouse</name>
    <dbReference type="NCBI Taxonomy" id="10090"/>
    <lineage>
        <taxon>Eukaryota</taxon>
        <taxon>Metazoa</taxon>
        <taxon>Chordata</taxon>
        <taxon>Craniata</taxon>
        <taxon>Vertebrata</taxon>
        <taxon>Euteleostomi</taxon>
        <taxon>Mammalia</taxon>
        <taxon>Eutheria</taxon>
        <taxon>Euarchontoglires</taxon>
        <taxon>Glires</taxon>
        <taxon>Rodentia</taxon>
        <taxon>Myomorpha</taxon>
        <taxon>Muroidea</taxon>
        <taxon>Muridae</taxon>
        <taxon>Murinae</taxon>
        <taxon>Mus</taxon>
        <taxon>Mus</taxon>
    </lineage>
</organism>